<reference key="1">
    <citation type="journal article" date="2004" name="DNA Res.">
        <title>Prediction of the coding sequences of mouse homologues of KIAA gene: IV. The complete nucleotide sequences of 500 mouse KIAA-homologous cDNAs identified by screening of terminal sequences of cDNA clones randomly sampled from size-fractionated libraries.</title>
        <authorList>
            <person name="Okazaki N."/>
            <person name="Kikuno R."/>
            <person name="Ohara R."/>
            <person name="Inamoto S."/>
            <person name="Koseki H."/>
            <person name="Hiraoka S."/>
            <person name="Saga Y."/>
            <person name="Seino S."/>
            <person name="Nishimura M."/>
            <person name="Kaisho T."/>
            <person name="Hoshino K."/>
            <person name="Kitamura H."/>
            <person name="Nagase T."/>
            <person name="Ohara O."/>
            <person name="Koga H."/>
        </authorList>
    </citation>
    <scope>NUCLEOTIDE SEQUENCE [LARGE SCALE MRNA] (ISOFORM 2)</scope>
    <source>
        <tissue>Spleen</tissue>
    </source>
</reference>
<reference key="2">
    <citation type="journal article" date="2005" name="Science">
        <title>The transcriptional landscape of the mammalian genome.</title>
        <authorList>
            <person name="Carninci P."/>
            <person name="Kasukawa T."/>
            <person name="Katayama S."/>
            <person name="Gough J."/>
            <person name="Frith M.C."/>
            <person name="Maeda N."/>
            <person name="Oyama R."/>
            <person name="Ravasi T."/>
            <person name="Lenhard B."/>
            <person name="Wells C."/>
            <person name="Kodzius R."/>
            <person name="Shimokawa K."/>
            <person name="Bajic V.B."/>
            <person name="Brenner S.E."/>
            <person name="Batalov S."/>
            <person name="Forrest A.R."/>
            <person name="Zavolan M."/>
            <person name="Davis M.J."/>
            <person name="Wilming L.G."/>
            <person name="Aidinis V."/>
            <person name="Allen J.E."/>
            <person name="Ambesi-Impiombato A."/>
            <person name="Apweiler R."/>
            <person name="Aturaliya R.N."/>
            <person name="Bailey T.L."/>
            <person name="Bansal M."/>
            <person name="Baxter L."/>
            <person name="Beisel K.W."/>
            <person name="Bersano T."/>
            <person name="Bono H."/>
            <person name="Chalk A.M."/>
            <person name="Chiu K.P."/>
            <person name="Choudhary V."/>
            <person name="Christoffels A."/>
            <person name="Clutterbuck D.R."/>
            <person name="Crowe M.L."/>
            <person name="Dalla E."/>
            <person name="Dalrymple B.P."/>
            <person name="de Bono B."/>
            <person name="Della Gatta G."/>
            <person name="di Bernardo D."/>
            <person name="Down T."/>
            <person name="Engstrom P."/>
            <person name="Fagiolini M."/>
            <person name="Faulkner G."/>
            <person name="Fletcher C.F."/>
            <person name="Fukushima T."/>
            <person name="Furuno M."/>
            <person name="Futaki S."/>
            <person name="Gariboldi M."/>
            <person name="Georgii-Hemming P."/>
            <person name="Gingeras T.R."/>
            <person name="Gojobori T."/>
            <person name="Green R.E."/>
            <person name="Gustincich S."/>
            <person name="Harbers M."/>
            <person name="Hayashi Y."/>
            <person name="Hensch T.K."/>
            <person name="Hirokawa N."/>
            <person name="Hill D."/>
            <person name="Huminiecki L."/>
            <person name="Iacono M."/>
            <person name="Ikeo K."/>
            <person name="Iwama A."/>
            <person name="Ishikawa T."/>
            <person name="Jakt M."/>
            <person name="Kanapin A."/>
            <person name="Katoh M."/>
            <person name="Kawasawa Y."/>
            <person name="Kelso J."/>
            <person name="Kitamura H."/>
            <person name="Kitano H."/>
            <person name="Kollias G."/>
            <person name="Krishnan S.P."/>
            <person name="Kruger A."/>
            <person name="Kummerfeld S.K."/>
            <person name="Kurochkin I.V."/>
            <person name="Lareau L.F."/>
            <person name="Lazarevic D."/>
            <person name="Lipovich L."/>
            <person name="Liu J."/>
            <person name="Liuni S."/>
            <person name="McWilliam S."/>
            <person name="Madan Babu M."/>
            <person name="Madera M."/>
            <person name="Marchionni L."/>
            <person name="Matsuda H."/>
            <person name="Matsuzawa S."/>
            <person name="Miki H."/>
            <person name="Mignone F."/>
            <person name="Miyake S."/>
            <person name="Morris K."/>
            <person name="Mottagui-Tabar S."/>
            <person name="Mulder N."/>
            <person name="Nakano N."/>
            <person name="Nakauchi H."/>
            <person name="Ng P."/>
            <person name="Nilsson R."/>
            <person name="Nishiguchi S."/>
            <person name="Nishikawa S."/>
            <person name="Nori F."/>
            <person name="Ohara O."/>
            <person name="Okazaki Y."/>
            <person name="Orlando V."/>
            <person name="Pang K.C."/>
            <person name="Pavan W.J."/>
            <person name="Pavesi G."/>
            <person name="Pesole G."/>
            <person name="Petrovsky N."/>
            <person name="Piazza S."/>
            <person name="Reed J."/>
            <person name="Reid J.F."/>
            <person name="Ring B.Z."/>
            <person name="Ringwald M."/>
            <person name="Rost B."/>
            <person name="Ruan Y."/>
            <person name="Salzberg S.L."/>
            <person name="Sandelin A."/>
            <person name="Schneider C."/>
            <person name="Schoenbach C."/>
            <person name="Sekiguchi K."/>
            <person name="Semple C.A."/>
            <person name="Seno S."/>
            <person name="Sessa L."/>
            <person name="Sheng Y."/>
            <person name="Shibata Y."/>
            <person name="Shimada H."/>
            <person name="Shimada K."/>
            <person name="Silva D."/>
            <person name="Sinclair B."/>
            <person name="Sperling S."/>
            <person name="Stupka E."/>
            <person name="Sugiura K."/>
            <person name="Sultana R."/>
            <person name="Takenaka Y."/>
            <person name="Taki K."/>
            <person name="Tammoja K."/>
            <person name="Tan S.L."/>
            <person name="Tang S."/>
            <person name="Taylor M.S."/>
            <person name="Tegner J."/>
            <person name="Teichmann S.A."/>
            <person name="Ueda H.R."/>
            <person name="van Nimwegen E."/>
            <person name="Verardo R."/>
            <person name="Wei C.L."/>
            <person name="Yagi K."/>
            <person name="Yamanishi H."/>
            <person name="Zabarovsky E."/>
            <person name="Zhu S."/>
            <person name="Zimmer A."/>
            <person name="Hide W."/>
            <person name="Bult C."/>
            <person name="Grimmond S.M."/>
            <person name="Teasdale R.D."/>
            <person name="Liu E.T."/>
            <person name="Brusic V."/>
            <person name="Quackenbush J."/>
            <person name="Wahlestedt C."/>
            <person name="Mattick J.S."/>
            <person name="Hume D.A."/>
            <person name="Kai C."/>
            <person name="Sasaki D."/>
            <person name="Tomaru Y."/>
            <person name="Fukuda S."/>
            <person name="Kanamori-Katayama M."/>
            <person name="Suzuki M."/>
            <person name="Aoki J."/>
            <person name="Arakawa T."/>
            <person name="Iida J."/>
            <person name="Imamura K."/>
            <person name="Itoh M."/>
            <person name="Kato T."/>
            <person name="Kawaji H."/>
            <person name="Kawagashira N."/>
            <person name="Kawashima T."/>
            <person name="Kojima M."/>
            <person name="Kondo S."/>
            <person name="Konno H."/>
            <person name="Nakano K."/>
            <person name="Ninomiya N."/>
            <person name="Nishio T."/>
            <person name="Okada M."/>
            <person name="Plessy C."/>
            <person name="Shibata K."/>
            <person name="Shiraki T."/>
            <person name="Suzuki S."/>
            <person name="Tagami M."/>
            <person name="Waki K."/>
            <person name="Watahiki A."/>
            <person name="Okamura-Oho Y."/>
            <person name="Suzuki H."/>
            <person name="Kawai J."/>
            <person name="Hayashizaki Y."/>
        </authorList>
    </citation>
    <scope>NUCLEOTIDE SEQUENCE [LARGE SCALE MRNA] (ISOFORMS 1; 2 AND 3)</scope>
    <source>
        <strain>C57BL/6J</strain>
        <tissue>Embryonic lung</tissue>
        <tissue>Embryonic stem cell</tissue>
        <tissue>Eye</tissue>
        <tissue>Liver tumor</tissue>
        <tissue>Spinal cord</tissue>
    </source>
</reference>
<reference key="3">
    <citation type="journal article" date="2004" name="Genome Res.">
        <title>The status, quality, and expansion of the NIH full-length cDNA project: the Mammalian Gene Collection (MGC).</title>
        <authorList>
            <consortium name="The MGC Project Team"/>
        </authorList>
    </citation>
    <scope>NUCLEOTIDE SEQUENCE [LARGE SCALE MRNA] (ISOFORM 1)</scope>
    <source>
        <strain>C57BL/6J</strain>
        <tissue>Brain</tissue>
    </source>
</reference>
<reference key="4">
    <citation type="journal article" date="2012" name="Mol. Cell">
        <title>The Kelch repeat protein KLHDC10 regulates oxidative stress-induced ASK1 activation by suppressing PP5.</title>
        <authorList>
            <person name="Sekine Y."/>
            <person name="Hatanaka R."/>
            <person name="Watanabe T."/>
            <person name="Sono N."/>
            <person name="Iemura S."/>
            <person name="Natsume T."/>
            <person name="Kuranaga E."/>
            <person name="Miura M."/>
            <person name="Takeda K."/>
            <person name="Ichijo H."/>
        </authorList>
    </citation>
    <scope>FUNCTION</scope>
    <scope>INTERACTION WITH PPP5C</scope>
    <scope>SUBCELLULAR LOCATION (ISOFORM 2)</scope>
</reference>
<reference key="5">
    <citation type="journal article" date="2014" name="Mol. Cell. Proteomics">
        <title>Immunoaffinity enrichment and mass spectrometry analysis of protein methylation.</title>
        <authorList>
            <person name="Guo A."/>
            <person name="Gu H."/>
            <person name="Zhou J."/>
            <person name="Mulhern D."/>
            <person name="Wang Y."/>
            <person name="Lee K.A."/>
            <person name="Yang V."/>
            <person name="Aguiar M."/>
            <person name="Kornhauser J."/>
            <person name="Jia X."/>
            <person name="Ren J."/>
            <person name="Beausoleil S.A."/>
            <person name="Silva J.C."/>
            <person name="Vemulapalli V."/>
            <person name="Bedford M.T."/>
            <person name="Comb M.J."/>
        </authorList>
    </citation>
    <scope>METHYLATION [LARGE SCALE ANALYSIS] AT ARG-13</scope>
    <scope>IDENTIFICATION BY MASS SPECTROMETRY [LARGE SCALE ANALYSIS]</scope>
    <source>
        <tissue>Brain</tissue>
        <tissue>Embryo</tissue>
    </source>
</reference>
<reference key="6">
    <citation type="journal article" date="2016" name="PLoS ONE">
        <title>KLHDC10 deficiency protects mice against TNFalpha-induced systemic inflammation.</title>
        <authorList>
            <person name="Yamaguchi N."/>
            <person name="Sekine S."/>
            <person name="Naguro I."/>
            <person name="Sekine Y."/>
            <person name="Ichijo H."/>
        </authorList>
    </citation>
    <scope>FUNCTION</scope>
    <scope>DISRUPTION PHENOTYPE</scope>
</reference>
<keyword id="KW-0025">Alternative splicing</keyword>
<keyword id="KW-0963">Cytoplasm</keyword>
<keyword id="KW-0880">Kelch repeat</keyword>
<keyword id="KW-0488">Methylation</keyword>
<keyword id="KW-0539">Nucleus</keyword>
<keyword id="KW-1185">Reference proteome</keyword>
<keyword id="KW-0677">Repeat</keyword>
<keyword id="KW-0833">Ubl conjugation pathway</keyword>
<feature type="chain" id="PRO_0000319437" description="Kelch domain-containing protein 10">
    <location>
        <begin position="1"/>
        <end position="439"/>
    </location>
</feature>
<feature type="repeat" description="Kelch 1" evidence="1">
    <location>
        <begin position="87"/>
        <end position="154"/>
    </location>
</feature>
<feature type="repeat" description="Kelch 2" evidence="1">
    <location>
        <begin position="155"/>
        <end position="198"/>
    </location>
</feature>
<feature type="repeat" description="Kelch 3" evidence="1">
    <location>
        <begin position="199"/>
        <end position="260"/>
    </location>
</feature>
<feature type="repeat" description="Kelch 4" evidence="1">
    <location>
        <begin position="261"/>
        <end position="319"/>
    </location>
</feature>
<feature type="repeat" description="Kelch 5" evidence="1">
    <location>
        <begin position="320"/>
        <end position="364"/>
    </location>
</feature>
<feature type="repeat" description="Kelch 6" evidence="1">
    <location>
        <begin position="365"/>
        <end position="403"/>
    </location>
</feature>
<feature type="region of interest" description="Disordered" evidence="2">
    <location>
        <begin position="1"/>
        <end position="50"/>
    </location>
</feature>
<feature type="region of interest" description="Interaction with CUL2" evidence="1">
    <location>
        <begin position="398"/>
        <end position="439"/>
    </location>
</feature>
<feature type="compositionally biased region" description="Gly residues" evidence="2">
    <location>
        <begin position="15"/>
        <end position="36"/>
    </location>
</feature>
<feature type="modified residue" description="Omega-N-methylarginine" evidence="9">
    <location>
        <position position="13"/>
    </location>
</feature>
<feature type="splice variant" id="VSP_031485" description="In isoform 3." evidence="6">
    <location>
        <begin position="1"/>
        <end position="140"/>
    </location>
</feature>
<feature type="splice variant" id="VSP_031486" description="In isoform 2." evidence="5 6">
    <location>
        <begin position="53"/>
        <end position="81"/>
    </location>
</feature>
<feature type="sequence conflict" description="In Ref. 2; BAC39372." evidence="8" ref="2">
    <original>R</original>
    <variation>W</variation>
    <location>
        <position position="12"/>
    </location>
</feature>
<feature type="sequence conflict" description="In Ref. 2; BAC35547." evidence="8" ref="2">
    <original>G</original>
    <variation>R</variation>
    <location>
        <position position="47"/>
    </location>
</feature>
<feature type="sequence conflict" description="In Ref. 2; BAC35547." evidence="8" ref="2">
    <original>G</original>
    <variation>R</variation>
    <location>
        <position position="266"/>
    </location>
</feature>
<feature type="sequence conflict" description="In Ref. 2; BAB27179." evidence="8" ref="2">
    <original>E</original>
    <variation>K</variation>
    <location>
        <position position="305"/>
    </location>
</feature>
<comment type="function">
    <text evidence="1 3 4">Substrate-recognition component of a Cul2-RING (CRL2) E3 ubiquitin-protein ligase complex of the DesCEND (destruction via C-end degrons) pathway, which recognizes a C-degron located at the extreme C-terminus of target proteins, leading to their ubiquitination and degradation (By similarity). The C-degron recognized by the DesCEND pathway is usually a motif of less than ten residues and can be present in full-length proteins, truncated proteins or proteolytically cleaved forms (By similarity). The CRL2(KLHDC10) complex specifically recognizes proteins with a proline-glycine (Pro-Gly) or an alanine tail (CAT tail) at the C-terminus, leading to their ubiquitination and degradation (By similarity). The CRL2(KLHDC10) complex is involved in the ribosome-associated quality control (RQC) pathway, which mediates the extraction of incompletely synthesized nascent chains from stalled ribosomes: CRL2(KLHDC10) acts downstream of NEMF and recognizes CAT tails associated with stalled nascent chains, leading to their ubiquitination and degradation (By similarity). Participates in the oxidative stress-induced cell death through MAP3K5 activation (By similarity). Inhibits PPP5C phosphatase activity on MAP3K5 (PubMed:23102700). Acts as a regulator of necroptosis (PubMed:27631783).</text>
</comment>
<comment type="pathway">
    <text evidence="1">Protein modification; protein ubiquitination.</text>
</comment>
<comment type="subunit">
    <text evidence="1 3">Component of a CRL2 E3 ubiquitin-protein ligase complex, also named ECS (Elongin BC-CUL2/5-SOCS-box protein) complex, composed of CUL2, Elongin BC (ELOB and ELOC), RBX1 and substrate-specific adapter KLHDC10 (By similarity). Interacts (via the 6 Kelch repeats) with PPP5C (PubMed:23102700).</text>
</comment>
<comment type="subcellular location">
    <subcellularLocation>
        <location evidence="1">Nucleus</location>
    </subcellularLocation>
    <subcellularLocation>
        <location evidence="1">Cytoplasm</location>
    </subcellularLocation>
</comment>
<comment type="subcellular location">
    <molecule>Isoform 2</molecule>
    <subcellularLocation>
        <location evidence="3">Cytoplasm</location>
    </subcellularLocation>
</comment>
<comment type="alternative products">
    <event type="alternative splicing"/>
    <isoform>
        <id>Q6PAR0-1</id>
        <name>1</name>
        <sequence type="displayed"/>
    </isoform>
    <isoform>
        <id>Q6PAR0-2</id>
        <name>2</name>
        <sequence type="described" ref="VSP_031486"/>
    </isoform>
    <isoform>
        <id>Q6PAR0-3</id>
        <name>3</name>
        <sequence type="described" ref="VSP_031485"/>
    </isoform>
</comment>
<comment type="disruption phenotype">
    <text evidence="4">No visible phenotype in normal conditions (PubMed:27631783). Mice are protected against TNF-alpha-induced systemic inflammation: they show a reduction in the inflammatory response, but not in early systemic necroptosis (PubMed:27631783).</text>
</comment>
<comment type="similarity">
    <text evidence="8">Belongs to the KLHDC10 family.</text>
</comment>
<comment type="sequence caution" evidence="8">
    <conflict type="erroneous initiation">
        <sequence resource="EMBL-CDS" id="BAB27179"/>
    </conflict>
    <text>Extended N-terminus.</text>
</comment>
<comment type="sequence caution" evidence="8">
    <conflict type="frameshift">
        <sequence resource="EMBL-CDS" id="BAC35547"/>
    </conflict>
</comment>
<comment type="sequence caution" evidence="8">
    <conflict type="erroneous initiation">
        <sequence resource="EMBL-CDS" id="BAD32201"/>
    </conflict>
    <text>Extended N-terminus.</text>
</comment>
<protein>
    <recommendedName>
        <fullName evidence="8">Kelch domain-containing protein 10</fullName>
    </recommendedName>
</protein>
<name>KLD10_MOUSE</name>
<dbReference type="EMBL" id="AK172923">
    <property type="protein sequence ID" value="BAD32201.1"/>
    <property type="status" value="ALT_INIT"/>
    <property type="molecule type" value="mRNA"/>
</dbReference>
<dbReference type="EMBL" id="AK010783">
    <property type="protein sequence ID" value="BAB27179.1"/>
    <property type="status" value="ALT_INIT"/>
    <property type="molecule type" value="mRNA"/>
</dbReference>
<dbReference type="EMBL" id="AK039732">
    <property type="protein sequence ID" value="BAC30430.1"/>
    <property type="molecule type" value="mRNA"/>
</dbReference>
<dbReference type="EMBL" id="AK050289">
    <property type="protein sequence ID" value="BAC34168.1"/>
    <property type="molecule type" value="mRNA"/>
</dbReference>
<dbReference type="EMBL" id="AK053834">
    <property type="protein sequence ID" value="BAC35547.1"/>
    <property type="status" value="ALT_FRAME"/>
    <property type="molecule type" value="mRNA"/>
</dbReference>
<dbReference type="EMBL" id="AK085116">
    <property type="protein sequence ID" value="BAC39370.1"/>
    <property type="molecule type" value="mRNA"/>
</dbReference>
<dbReference type="EMBL" id="AK085130">
    <property type="protein sequence ID" value="BAC39372.1"/>
    <property type="molecule type" value="mRNA"/>
</dbReference>
<dbReference type="EMBL" id="BC060132">
    <property type="protein sequence ID" value="AAH60132.1"/>
    <property type="molecule type" value="mRNA"/>
</dbReference>
<dbReference type="CCDS" id="CCDS19971.1">
    <molecule id="Q6PAR0-1"/>
</dbReference>
<dbReference type="CCDS" id="CCDS80509.1">
    <molecule id="Q6PAR0-2"/>
</dbReference>
<dbReference type="RefSeq" id="NP_001298016.1">
    <molecule id="Q6PAR0-2"/>
    <property type="nucleotide sequence ID" value="NM_001311087.1"/>
</dbReference>
<dbReference type="RefSeq" id="NP_084018.1">
    <molecule id="Q6PAR0-1"/>
    <property type="nucleotide sequence ID" value="NM_029742.3"/>
</dbReference>
<dbReference type="SMR" id="Q6PAR0"/>
<dbReference type="BioGRID" id="218315">
    <property type="interactions" value="2"/>
</dbReference>
<dbReference type="FunCoup" id="Q6PAR0">
    <property type="interactions" value="3205"/>
</dbReference>
<dbReference type="STRING" id="10090.ENSMUSP00000069669"/>
<dbReference type="GlyGen" id="Q6PAR0">
    <property type="glycosylation" value="1 site"/>
</dbReference>
<dbReference type="iPTMnet" id="Q6PAR0"/>
<dbReference type="PhosphoSitePlus" id="Q6PAR0"/>
<dbReference type="SwissPalm" id="Q6PAR0"/>
<dbReference type="PaxDb" id="10090-ENSMUSP00000069669"/>
<dbReference type="PeptideAtlas" id="Q6PAR0"/>
<dbReference type="ProteomicsDB" id="264941">
    <molecule id="Q6PAR0-1"/>
</dbReference>
<dbReference type="ProteomicsDB" id="264942">
    <molecule id="Q6PAR0-2"/>
</dbReference>
<dbReference type="ProteomicsDB" id="264943">
    <molecule id="Q6PAR0-3"/>
</dbReference>
<dbReference type="Pumba" id="Q6PAR0"/>
<dbReference type="Antibodypedia" id="17939">
    <property type="antibodies" value="20 antibodies from 11 providers"/>
</dbReference>
<dbReference type="DNASU" id="76788"/>
<dbReference type="Ensembl" id="ENSMUST00000068240.13">
    <molecule id="Q6PAR0-2"/>
    <property type="protein sequence ID" value="ENSMUSP00000064594.7"/>
    <property type="gene ID" value="ENSMUSG00000029775.15"/>
</dbReference>
<dbReference type="Ensembl" id="ENSMUST00000068259.10">
    <molecule id="Q6PAR0-1"/>
    <property type="protein sequence ID" value="ENSMUSP00000069669.7"/>
    <property type="gene ID" value="ENSMUSG00000029775.15"/>
</dbReference>
<dbReference type="Ensembl" id="ENSMUST00000144272.8">
    <molecule id="Q6PAR0-3"/>
    <property type="protein sequence ID" value="ENSMUSP00000145063.2"/>
    <property type="gene ID" value="ENSMUSG00000029775.15"/>
</dbReference>
<dbReference type="GeneID" id="76788"/>
<dbReference type="KEGG" id="mmu:76788"/>
<dbReference type="UCSC" id="uc009bfe.1">
    <molecule id="Q6PAR0-1"/>
    <property type="organism name" value="mouse"/>
</dbReference>
<dbReference type="UCSC" id="uc009bff.1">
    <molecule id="Q6PAR0-2"/>
    <property type="organism name" value="mouse"/>
</dbReference>
<dbReference type="AGR" id="MGI:1924038"/>
<dbReference type="CTD" id="23008"/>
<dbReference type="MGI" id="MGI:1924038">
    <property type="gene designation" value="Klhdc10"/>
</dbReference>
<dbReference type="VEuPathDB" id="HostDB:ENSMUSG00000029775"/>
<dbReference type="eggNOG" id="KOG0379">
    <property type="taxonomic scope" value="Eukaryota"/>
</dbReference>
<dbReference type="GeneTree" id="ENSGT00940000155977"/>
<dbReference type="HOGENOM" id="CLU_030914_0_0_1"/>
<dbReference type="InParanoid" id="Q6PAR0"/>
<dbReference type="OMA" id="IHKHYLY"/>
<dbReference type="OrthoDB" id="7676067at2759"/>
<dbReference type="PhylomeDB" id="Q6PAR0"/>
<dbReference type="TreeFam" id="TF314081"/>
<dbReference type="UniPathway" id="UPA00143"/>
<dbReference type="BioGRID-ORCS" id="76788">
    <property type="hits" value="1 hit in 77 CRISPR screens"/>
</dbReference>
<dbReference type="ChiTaRS" id="Klhdc10">
    <property type="organism name" value="mouse"/>
</dbReference>
<dbReference type="PRO" id="PR:Q6PAR0"/>
<dbReference type="Proteomes" id="UP000000589">
    <property type="component" value="Chromosome 6"/>
</dbReference>
<dbReference type="RNAct" id="Q6PAR0">
    <property type="molecule type" value="protein"/>
</dbReference>
<dbReference type="Bgee" id="ENSMUSG00000029775">
    <property type="expression patterns" value="Expressed in internal carotid artery and 226 other cell types or tissues"/>
</dbReference>
<dbReference type="ExpressionAtlas" id="Q6PAR0">
    <property type="expression patterns" value="baseline and differential"/>
</dbReference>
<dbReference type="GO" id="GO:0031462">
    <property type="term" value="C:Cul2-RING ubiquitin ligase complex"/>
    <property type="evidence" value="ECO:0000250"/>
    <property type="project" value="UniProtKB"/>
</dbReference>
<dbReference type="GO" id="GO:0005737">
    <property type="term" value="C:cytoplasm"/>
    <property type="evidence" value="ECO:0007669"/>
    <property type="project" value="UniProtKB-SubCell"/>
</dbReference>
<dbReference type="GO" id="GO:0005654">
    <property type="term" value="C:nucleoplasm"/>
    <property type="evidence" value="ECO:0007669"/>
    <property type="project" value="Ensembl"/>
</dbReference>
<dbReference type="GO" id="GO:1990756">
    <property type="term" value="F:ubiquitin-like ligase-substrate adaptor activity"/>
    <property type="evidence" value="ECO:0000250"/>
    <property type="project" value="UniProtKB"/>
</dbReference>
<dbReference type="GO" id="GO:0016567">
    <property type="term" value="P:protein ubiquitination"/>
    <property type="evidence" value="ECO:0007669"/>
    <property type="project" value="UniProtKB-UniPathway"/>
</dbReference>
<dbReference type="GO" id="GO:0072344">
    <property type="term" value="P:rescue of stalled ribosome"/>
    <property type="evidence" value="ECO:0000250"/>
    <property type="project" value="UniProtKB"/>
</dbReference>
<dbReference type="GO" id="GO:0140627">
    <property type="term" value="P:ubiquitin-dependent protein catabolic process via the C-end degron rule pathway"/>
    <property type="evidence" value="ECO:0000250"/>
    <property type="project" value="UniProtKB"/>
</dbReference>
<dbReference type="FunFam" id="2.120.10.80:FF:000009">
    <property type="entry name" value="Kelch domain-containing protein 10"/>
    <property type="match status" value="1"/>
</dbReference>
<dbReference type="FunFam" id="2.120.10.80:FF:000010">
    <property type="entry name" value="kelch domain-containing protein 10"/>
    <property type="match status" value="1"/>
</dbReference>
<dbReference type="Gene3D" id="2.120.10.80">
    <property type="entry name" value="Kelch-type beta propeller"/>
    <property type="match status" value="2"/>
</dbReference>
<dbReference type="InterPro" id="IPR015915">
    <property type="entry name" value="Kelch-typ_b-propeller"/>
</dbReference>
<dbReference type="InterPro" id="IPR006652">
    <property type="entry name" value="Kelch_1"/>
</dbReference>
<dbReference type="InterPro" id="IPR052125">
    <property type="entry name" value="KLHDC10"/>
</dbReference>
<dbReference type="PANTHER" id="PTHR46428">
    <property type="entry name" value="KELCH DOMAIN-CONTAINING PROTEIN 10"/>
    <property type="match status" value="1"/>
</dbReference>
<dbReference type="PANTHER" id="PTHR46428:SF1">
    <property type="entry name" value="KELCH DOMAIN-CONTAINING PROTEIN 10"/>
    <property type="match status" value="1"/>
</dbReference>
<dbReference type="Pfam" id="PF13418">
    <property type="entry name" value="Kelch_4"/>
    <property type="match status" value="1"/>
</dbReference>
<dbReference type="Pfam" id="PF24681">
    <property type="entry name" value="Kelch_KLHDC2_KLHL20_DRC7"/>
    <property type="match status" value="1"/>
</dbReference>
<dbReference type="SMART" id="SM00612">
    <property type="entry name" value="Kelch"/>
    <property type="match status" value="2"/>
</dbReference>
<dbReference type="SUPFAM" id="SSF117281">
    <property type="entry name" value="Kelch motif"/>
    <property type="match status" value="1"/>
</dbReference>
<dbReference type="SUPFAM" id="SSF101898">
    <property type="entry name" value="NHL repeat"/>
    <property type="match status" value="1"/>
</dbReference>
<gene>
    <name evidence="7" type="primary">Klhdc10</name>
    <name evidence="5" type="synonym">Kiaa0265</name>
</gene>
<organism>
    <name type="scientific">Mus musculus</name>
    <name type="common">Mouse</name>
    <dbReference type="NCBI Taxonomy" id="10090"/>
    <lineage>
        <taxon>Eukaryota</taxon>
        <taxon>Metazoa</taxon>
        <taxon>Chordata</taxon>
        <taxon>Craniata</taxon>
        <taxon>Vertebrata</taxon>
        <taxon>Euteleostomi</taxon>
        <taxon>Mammalia</taxon>
        <taxon>Eutheria</taxon>
        <taxon>Euarchontoglires</taxon>
        <taxon>Glires</taxon>
        <taxon>Rodentia</taxon>
        <taxon>Myomorpha</taxon>
        <taxon>Muroidea</taxon>
        <taxon>Muridae</taxon>
        <taxon>Murinae</taxon>
        <taxon>Mus</taxon>
        <taxon>Mus</taxon>
    </lineage>
</organism>
<proteinExistence type="evidence at protein level"/>
<sequence length="439" mass="49012">MSAAQGWDRNRRRGGGAAGGASGVSGAGAAGGGRGTGQLNRFVQLSGRPHLPGKKKIRWDPVRRRFIQSCPIIRIPNRFLRGHRPPPARSGHRCVADNTNLYVFGGYNPDYDESGGPDNEDYPLFRELWRYHFATGVWHQMGTDGYMPRELASMSLVLHGNNLLVFGGTGIPFGESNGNDVHVCNVKYKRWALLSCRGKRPSRIYGQAMALINGSLYVFGGTTGYIYSTDLHKLDLNTMVWTQLKPNNLSCDLPEERYRHEIAHDGQRIYILGGGTSWTAYSLNKIHAYNLETNAWEEIATKPHEKIGFPAARRCHSCVQIKNDVFICGGYNGEVILGDIWKLNLQTFQWVKLPATMPEPVYFHCAAVTPAGCMYIHGGVVNIHENKRTGSLFKIWLVVPSLLELAWEKLLAAFPNLANLSRTQLLHLGLTQELIERLK</sequence>
<evidence type="ECO:0000250" key="1">
    <source>
        <dbReference type="UniProtKB" id="Q6PID8"/>
    </source>
</evidence>
<evidence type="ECO:0000256" key="2">
    <source>
        <dbReference type="SAM" id="MobiDB-lite"/>
    </source>
</evidence>
<evidence type="ECO:0000269" key="3">
    <source>
    </source>
</evidence>
<evidence type="ECO:0000269" key="4">
    <source>
    </source>
</evidence>
<evidence type="ECO:0000303" key="5">
    <source>
    </source>
</evidence>
<evidence type="ECO:0000303" key="6">
    <source>
    </source>
</evidence>
<evidence type="ECO:0000303" key="7">
    <source>
    </source>
</evidence>
<evidence type="ECO:0000305" key="8"/>
<evidence type="ECO:0007744" key="9">
    <source>
    </source>
</evidence>
<accession>Q6PAR0</accession>
<accession>Q6A095</accession>
<accession>Q8BH94</accession>
<accession>Q8BPK7</accession>
<accession>Q8C3Q4</accession>
<accession>Q8C7G4</accession>
<accession>Q9CWF4</accession>